<reference key="1">
    <citation type="journal article" date="1992" name="J. Gen. Virol.">
        <title>Nucleotide sequence of shallot virus X RNA reveals a 5'-proximal cistron closely related to those of potexviruses and a unique arrangement of the 3'-proximal cistrons.</title>
        <authorList>
            <person name="Kanyuka K.V."/>
            <person name="Vishnichenko V.K."/>
            <person name="Levay K.E."/>
            <person name="Kondrikov D.Y."/>
            <person name="Ryabov E.V."/>
            <person name="Zavriev S.K."/>
        </authorList>
    </citation>
    <scope>NUCLEOTIDE SEQUENCE [GENOMIC RNA]</scope>
</reference>
<proteinExistence type="inferred from homology"/>
<name>TGB2_SHVX</name>
<comment type="function">
    <text evidence="1">Plays a role in viral cell-to-cell propagation, by facilitating genome transport to neighboring plant cells through plasmosdesmata,.</text>
</comment>
<comment type="subcellular location">
    <subcellularLocation>
        <location evidence="1">Host endoplasmic reticulum membrane</location>
    </subcellularLocation>
</comment>
<comment type="miscellaneous">
    <text>TGBp1, TGBp2 and TGBp3 seem to act together for cell-to-cell propagation. TGBp1 is the main movement protein that physically cross the plasmodesma with the viral genome. TGBp2 and TGBp3 would facilitate TGBp1 function.</text>
</comment>
<comment type="similarity">
    <text evidence="3">Belongs to the Tymovirales TGBp2 protein family.</text>
</comment>
<organismHost>
    <name type="scientific">Allium cepa var. aggregatum</name>
    <name type="common">Shallot</name>
    <name type="synonym">Allium ascalonicum</name>
    <dbReference type="NCBI Taxonomy" id="28911"/>
</organismHost>
<protein>
    <recommendedName>
        <fullName>Movement protein TGB2</fullName>
    </recommendedName>
    <alternativeName>
        <fullName>12 kDa protein</fullName>
    </alternativeName>
    <alternativeName>
        <fullName>Triple gene block 2 protein</fullName>
        <shortName>TGBp2</shortName>
    </alternativeName>
</protein>
<dbReference type="EMBL" id="M97264">
    <property type="protein sequence ID" value="AAA47789.1"/>
    <property type="molecule type" value="Genomic_RNA"/>
</dbReference>
<dbReference type="PIR" id="JQ1736">
    <property type="entry name" value="JQ1736"/>
</dbReference>
<dbReference type="RefSeq" id="NP_620650.1">
    <property type="nucleotide sequence ID" value="NC_003795.1"/>
</dbReference>
<dbReference type="KEGG" id="vg:944364"/>
<dbReference type="OrthoDB" id="20634at10239"/>
<dbReference type="Proteomes" id="UP000001663">
    <property type="component" value="Genome"/>
</dbReference>
<dbReference type="GO" id="GO:0044167">
    <property type="term" value="C:host cell endoplasmic reticulum membrane"/>
    <property type="evidence" value="ECO:0007669"/>
    <property type="project" value="UniProtKB-SubCell"/>
</dbReference>
<dbReference type="GO" id="GO:0016020">
    <property type="term" value="C:membrane"/>
    <property type="evidence" value="ECO:0007669"/>
    <property type="project" value="UniProtKB-KW"/>
</dbReference>
<dbReference type="GO" id="GO:0046740">
    <property type="term" value="P:transport of virus in host, cell to cell"/>
    <property type="evidence" value="ECO:0007669"/>
    <property type="project" value="UniProtKB-KW"/>
</dbReference>
<dbReference type="InterPro" id="IPR001896">
    <property type="entry name" value="Plant_vir_prot"/>
</dbReference>
<dbReference type="Pfam" id="PF01307">
    <property type="entry name" value="Plant_vir_prot"/>
    <property type="match status" value="1"/>
</dbReference>
<gene>
    <name type="ORF">ORF3</name>
</gene>
<feature type="chain" id="PRO_0000222595" description="Movement protein TGB2">
    <location>
        <begin position="1"/>
        <end position="103"/>
    </location>
</feature>
<feature type="topological domain" description="Cytoplasmic" evidence="1">
    <location>
        <begin position="1"/>
        <end position="8"/>
    </location>
</feature>
<feature type="transmembrane region" description="Helical" evidence="2">
    <location>
        <begin position="9"/>
        <end position="29"/>
    </location>
</feature>
<feature type="topological domain" description="Lumenal" evidence="1">
    <location>
        <begin position="30"/>
        <end position="70"/>
    </location>
</feature>
<feature type="transmembrane region" description="Helical" evidence="2">
    <location>
        <begin position="71"/>
        <end position="91"/>
    </location>
</feature>
<feature type="topological domain" description="Cytoplasmic" evidence="1">
    <location>
        <begin position="92"/>
        <end position="103"/>
    </location>
</feature>
<keyword id="KW-1038">Host endoplasmic reticulum</keyword>
<keyword id="KW-1043">Host membrane</keyword>
<keyword id="KW-0472">Membrane</keyword>
<keyword id="KW-1185">Reference proteome</keyword>
<keyword id="KW-0812">Transmembrane</keyword>
<keyword id="KW-1133">Transmembrane helix</keyword>
<keyword id="KW-0813">Transport</keyword>
<keyword id="KW-0916">Viral movement protein</keyword>
<accession>Q04582</accession>
<sequence length="103" mass="11246">MSFAPPPDYSKIYLALGCGLGLGFVVYASRVNHLPHVGDNTHNLPHGGQYCDGNKRVLYSGPKSGSSPTNNLWPFITVIALTLAILLTSCPRRRVCIRCSQHH</sequence>
<organism>
    <name type="scientific">Shallot virus X</name>
    <name type="common">ShVX</name>
    <dbReference type="NCBI Taxonomy" id="31770"/>
    <lineage>
        <taxon>Viruses</taxon>
        <taxon>Riboviria</taxon>
        <taxon>Orthornavirae</taxon>
        <taxon>Kitrinoviricota</taxon>
        <taxon>Alsuviricetes</taxon>
        <taxon>Tymovirales</taxon>
        <taxon>Alphaflexiviridae</taxon>
        <taxon>Allexivirus</taxon>
        <taxon>Acarallexivirus</taxon>
    </lineage>
</organism>
<evidence type="ECO:0000250" key="1"/>
<evidence type="ECO:0000255" key="2"/>
<evidence type="ECO:0000305" key="3"/>